<proteinExistence type="inferred from homology"/>
<name>HPPK_PSEAE</name>
<protein>
    <recommendedName>
        <fullName evidence="1">2-amino-4-hydroxy-6-hydroxymethyldihydropteridine pyrophosphokinase</fullName>
        <ecNumber evidence="1">2.7.6.3</ecNumber>
    </recommendedName>
    <alternativeName>
        <fullName evidence="1">6-hydroxymethyl-7,8-dihydropterin pyrophosphokinase</fullName>
        <shortName evidence="1">PPPK</shortName>
    </alternativeName>
    <alternativeName>
        <fullName evidence="1">7,8-dihydro-6-hydroxymethylpterin-pyrophosphokinase</fullName>
        <shortName evidence="1">HPPK</shortName>
    </alternativeName>
</protein>
<organism>
    <name type="scientific">Pseudomonas aeruginosa (strain ATCC 15692 / DSM 22644 / CIP 104116 / JCM 14847 / LMG 12228 / 1C / PRS 101 / PAO1)</name>
    <dbReference type="NCBI Taxonomy" id="208964"/>
    <lineage>
        <taxon>Bacteria</taxon>
        <taxon>Pseudomonadati</taxon>
        <taxon>Pseudomonadota</taxon>
        <taxon>Gammaproteobacteria</taxon>
        <taxon>Pseudomonadales</taxon>
        <taxon>Pseudomonadaceae</taxon>
        <taxon>Pseudomonas</taxon>
    </lineage>
</organism>
<accession>Q9HV71</accession>
<gene>
    <name type="primary">folK</name>
    <name type="ordered locus">PA4728</name>
</gene>
<comment type="function">
    <text evidence="1">Catalyzes the transfer of pyrophosphate from adenosine triphosphate (ATP) to 6-hydroxymethyl-7,8-dihydropterin, an enzymatic step in folate biosynthesis pathway.</text>
</comment>
<comment type="catalytic activity">
    <reaction evidence="1">
        <text>6-hydroxymethyl-7,8-dihydropterin + ATP = (7,8-dihydropterin-6-yl)methyl diphosphate + AMP + H(+)</text>
        <dbReference type="Rhea" id="RHEA:11412"/>
        <dbReference type="ChEBI" id="CHEBI:15378"/>
        <dbReference type="ChEBI" id="CHEBI:30616"/>
        <dbReference type="ChEBI" id="CHEBI:44841"/>
        <dbReference type="ChEBI" id="CHEBI:72950"/>
        <dbReference type="ChEBI" id="CHEBI:456215"/>
        <dbReference type="EC" id="2.7.6.3"/>
    </reaction>
</comment>
<comment type="pathway">
    <text evidence="1">Cofactor biosynthesis; tetrahydrofolate biosynthesis; 2-amino-4-hydroxy-6-hydroxymethyl-7,8-dihydropteridine diphosphate from 7,8-dihydroneopterin triphosphate: step 4/4.</text>
</comment>
<comment type="similarity">
    <text evidence="2">Belongs to the HPPK family.</text>
</comment>
<evidence type="ECO:0000250" key="1">
    <source>
        <dbReference type="UniProtKB" id="P26281"/>
    </source>
</evidence>
<evidence type="ECO:0000305" key="2"/>
<dbReference type="EC" id="2.7.6.3" evidence="1"/>
<dbReference type="EMBL" id="AE004091">
    <property type="protein sequence ID" value="AAG08114.1"/>
    <property type="molecule type" value="Genomic_DNA"/>
</dbReference>
<dbReference type="PIR" id="E83055">
    <property type="entry name" value="E83055"/>
</dbReference>
<dbReference type="RefSeq" id="NP_253416.1">
    <property type="nucleotide sequence ID" value="NC_002516.2"/>
</dbReference>
<dbReference type="RefSeq" id="WP_003095144.1">
    <property type="nucleotide sequence ID" value="NZ_QZGE01000018.1"/>
</dbReference>
<dbReference type="SMR" id="Q9HV71"/>
<dbReference type="FunCoup" id="Q9HV71">
    <property type="interactions" value="585"/>
</dbReference>
<dbReference type="STRING" id="208964.PA4728"/>
<dbReference type="PaxDb" id="208964-PA4728"/>
<dbReference type="DNASU" id="881616"/>
<dbReference type="GeneID" id="881616"/>
<dbReference type="KEGG" id="pae:PA4728"/>
<dbReference type="PATRIC" id="fig|208964.12.peg.4953"/>
<dbReference type="PseudoCAP" id="PA4728"/>
<dbReference type="HOGENOM" id="CLU_097916_0_1_6"/>
<dbReference type="InParanoid" id="Q9HV71"/>
<dbReference type="OrthoDB" id="9808041at2"/>
<dbReference type="PhylomeDB" id="Q9HV71"/>
<dbReference type="BioCyc" id="PAER208964:G1FZ6-4838-MONOMER"/>
<dbReference type="UniPathway" id="UPA00077">
    <property type="reaction ID" value="UER00155"/>
</dbReference>
<dbReference type="Proteomes" id="UP000002438">
    <property type="component" value="Chromosome"/>
</dbReference>
<dbReference type="GO" id="GO:0003848">
    <property type="term" value="F:2-amino-4-hydroxy-6-hydroxymethyldihydropteridine diphosphokinase activity"/>
    <property type="evidence" value="ECO:0007669"/>
    <property type="project" value="UniProtKB-EC"/>
</dbReference>
<dbReference type="GO" id="GO:0005524">
    <property type="term" value="F:ATP binding"/>
    <property type="evidence" value="ECO:0007669"/>
    <property type="project" value="UniProtKB-KW"/>
</dbReference>
<dbReference type="GO" id="GO:0016301">
    <property type="term" value="F:kinase activity"/>
    <property type="evidence" value="ECO:0007669"/>
    <property type="project" value="UniProtKB-KW"/>
</dbReference>
<dbReference type="GO" id="GO:0046656">
    <property type="term" value="P:folic acid biosynthetic process"/>
    <property type="evidence" value="ECO:0007669"/>
    <property type="project" value="UniProtKB-KW"/>
</dbReference>
<dbReference type="GO" id="GO:0046654">
    <property type="term" value="P:tetrahydrofolate biosynthetic process"/>
    <property type="evidence" value="ECO:0007669"/>
    <property type="project" value="UniProtKB-UniPathway"/>
</dbReference>
<dbReference type="CDD" id="cd00483">
    <property type="entry name" value="HPPK"/>
    <property type="match status" value="1"/>
</dbReference>
<dbReference type="Gene3D" id="3.30.70.560">
    <property type="entry name" value="7,8-Dihydro-6-hydroxymethylpterin-pyrophosphokinase HPPK"/>
    <property type="match status" value="1"/>
</dbReference>
<dbReference type="InterPro" id="IPR000550">
    <property type="entry name" value="Hppk"/>
</dbReference>
<dbReference type="InterPro" id="IPR035907">
    <property type="entry name" value="Hppk_sf"/>
</dbReference>
<dbReference type="NCBIfam" id="TIGR01498">
    <property type="entry name" value="folK"/>
    <property type="match status" value="1"/>
</dbReference>
<dbReference type="PANTHER" id="PTHR43071">
    <property type="entry name" value="2-AMINO-4-HYDROXY-6-HYDROXYMETHYLDIHYDROPTERIDINE PYROPHOSPHOKINASE"/>
    <property type="match status" value="1"/>
</dbReference>
<dbReference type="PANTHER" id="PTHR43071:SF1">
    <property type="entry name" value="2-AMINO-4-HYDROXY-6-HYDROXYMETHYLDIHYDROPTERIDINE PYROPHOSPHOKINASE"/>
    <property type="match status" value="1"/>
</dbReference>
<dbReference type="Pfam" id="PF01288">
    <property type="entry name" value="HPPK"/>
    <property type="match status" value="1"/>
</dbReference>
<dbReference type="SUPFAM" id="SSF55083">
    <property type="entry name" value="6-hydroxymethyl-7,8-dihydropterin pyrophosphokinase, HPPK"/>
    <property type="match status" value="1"/>
</dbReference>
<dbReference type="PROSITE" id="PS00794">
    <property type="entry name" value="HPPK"/>
    <property type="match status" value="1"/>
</dbReference>
<feature type="chain" id="PRO_0000287770" description="2-amino-4-hydroxy-6-hydroxymethyldihydropteridine pyrophosphokinase">
    <location>
        <begin position="1"/>
        <end position="162"/>
    </location>
</feature>
<keyword id="KW-0067">ATP-binding</keyword>
<keyword id="KW-0289">Folate biosynthesis</keyword>
<keyword id="KW-0418">Kinase</keyword>
<keyword id="KW-0547">Nucleotide-binding</keyword>
<keyword id="KW-1185">Reference proteome</keyword>
<keyword id="KW-0808">Transferase</keyword>
<sequence>MIQRVYVALGSNLAEPREQIQAALDAFERLPETRLVAVSPLYISDPLGPADQPRFVNGVAALDTNLAPLDLLDALQAIELEQGRVRDLRWGPRTLDLDILLFGEQLLDLPRLKVPHYHMQARAFVLYPLADLAPDLRLPDGRHLPELLAACPFEGIERLPGA</sequence>
<reference key="1">
    <citation type="journal article" date="2000" name="Nature">
        <title>Complete genome sequence of Pseudomonas aeruginosa PAO1, an opportunistic pathogen.</title>
        <authorList>
            <person name="Stover C.K."/>
            <person name="Pham X.-Q.T."/>
            <person name="Erwin A.L."/>
            <person name="Mizoguchi S.D."/>
            <person name="Warrener P."/>
            <person name="Hickey M.J."/>
            <person name="Brinkman F.S.L."/>
            <person name="Hufnagle W.O."/>
            <person name="Kowalik D.J."/>
            <person name="Lagrou M."/>
            <person name="Garber R.L."/>
            <person name="Goltry L."/>
            <person name="Tolentino E."/>
            <person name="Westbrock-Wadman S."/>
            <person name="Yuan Y."/>
            <person name="Brody L.L."/>
            <person name="Coulter S.N."/>
            <person name="Folger K.R."/>
            <person name="Kas A."/>
            <person name="Larbig K."/>
            <person name="Lim R.M."/>
            <person name="Smith K.A."/>
            <person name="Spencer D.H."/>
            <person name="Wong G.K.-S."/>
            <person name="Wu Z."/>
            <person name="Paulsen I.T."/>
            <person name="Reizer J."/>
            <person name="Saier M.H. Jr."/>
            <person name="Hancock R.E.W."/>
            <person name="Lory S."/>
            <person name="Olson M.V."/>
        </authorList>
    </citation>
    <scope>NUCLEOTIDE SEQUENCE [LARGE SCALE GENOMIC DNA]</scope>
    <source>
        <strain>ATCC 15692 / DSM 22644 / CIP 104116 / JCM 14847 / LMG 12228 / 1C / PRS 101 / PAO1</strain>
    </source>
</reference>